<proteinExistence type="inferred from homology"/>
<feature type="chain" id="PRO_0000121958" description="Probable tRNA pseudouridine synthase B">
    <location>
        <begin position="1"/>
        <end position="338"/>
    </location>
</feature>
<feature type="domain" description="PUA" evidence="1">
    <location>
        <begin position="245"/>
        <end position="320"/>
    </location>
</feature>
<feature type="active site" description="Nucleophile" evidence="1">
    <location>
        <position position="78"/>
    </location>
</feature>
<evidence type="ECO:0000255" key="1">
    <source>
        <dbReference type="HAMAP-Rule" id="MF_01081"/>
    </source>
</evidence>
<comment type="function">
    <text evidence="1">Could be responsible for synthesis of pseudouridine from uracil-55 in the psi GC loop of transfer RNAs.</text>
</comment>
<comment type="catalytic activity">
    <reaction evidence="1">
        <text>uridine(55) in tRNA = pseudouridine(55) in tRNA</text>
        <dbReference type="Rhea" id="RHEA:42532"/>
        <dbReference type="Rhea" id="RHEA-COMP:10101"/>
        <dbReference type="Rhea" id="RHEA-COMP:10102"/>
        <dbReference type="ChEBI" id="CHEBI:65314"/>
        <dbReference type="ChEBI" id="CHEBI:65315"/>
        <dbReference type="EC" id="5.4.99.25"/>
    </reaction>
</comment>
<comment type="similarity">
    <text evidence="1">Belongs to the pseudouridine synthase TruB family. Type 2 subfamily.</text>
</comment>
<name>TRUB_METAC</name>
<gene>
    <name evidence="1" type="primary">truB</name>
    <name type="ordered locus">MA_1105</name>
</gene>
<keyword id="KW-0413">Isomerase</keyword>
<keyword id="KW-1185">Reference proteome</keyword>
<keyword id="KW-0819">tRNA processing</keyword>
<protein>
    <recommendedName>
        <fullName evidence="1">Probable tRNA pseudouridine synthase B</fullName>
        <ecNumber evidence="1">5.4.99.25</ecNumber>
    </recommendedName>
    <alternativeName>
        <fullName evidence="1">tRNA pseudouridine(55) synthase</fullName>
        <shortName evidence="1">Psi55 synthase</shortName>
    </alternativeName>
    <alternativeName>
        <fullName evidence="1">tRNA pseudouridylate synthase</fullName>
    </alternativeName>
    <alternativeName>
        <fullName evidence="1">tRNA-uridine isomerase</fullName>
    </alternativeName>
</protein>
<sequence length="338" mass="36647">MSSAGKLPSEIERTLVRKSGAWTNPVYGCAPEKRPILEYIEKGVVNIDKPSGPTSHEVAAWVKAILGVNTAGHAGSLDPKVTGLLPTLLGKATKAVPALRLSGKEYVCHLKLHRAMPPKLVRKVCEEFTGPIYQMPPIKSAVKRVIRVRTIYYIEVLEIEGMSVLFRVGCEAGTYIRKLCHDIGLALGCGGHMQALRRTKAGPFTEKTLVTLHELKDAYVFWKEDGDESELRRVIRPMESAVSHLPKIILRDSAVDAVCSGASLAVPGITSLDSSLAEGELAALFTLKGELVALAKAEMNTEEILKASAGIAASPIRVLMEAGTYPKGWTKKEESVRL</sequence>
<reference key="1">
    <citation type="journal article" date="2002" name="Genome Res.">
        <title>The genome of Methanosarcina acetivorans reveals extensive metabolic and physiological diversity.</title>
        <authorList>
            <person name="Galagan J.E."/>
            <person name="Nusbaum C."/>
            <person name="Roy A."/>
            <person name="Endrizzi M.G."/>
            <person name="Macdonald P."/>
            <person name="FitzHugh W."/>
            <person name="Calvo S."/>
            <person name="Engels R."/>
            <person name="Smirnov S."/>
            <person name="Atnoor D."/>
            <person name="Brown A."/>
            <person name="Allen N."/>
            <person name="Naylor J."/>
            <person name="Stange-Thomann N."/>
            <person name="DeArellano K."/>
            <person name="Johnson R."/>
            <person name="Linton L."/>
            <person name="McEwan P."/>
            <person name="McKernan K."/>
            <person name="Talamas J."/>
            <person name="Tirrell A."/>
            <person name="Ye W."/>
            <person name="Zimmer A."/>
            <person name="Barber R.D."/>
            <person name="Cann I."/>
            <person name="Graham D.E."/>
            <person name="Grahame D.A."/>
            <person name="Guss A.M."/>
            <person name="Hedderich R."/>
            <person name="Ingram-Smith C."/>
            <person name="Kuettner H.C."/>
            <person name="Krzycki J.A."/>
            <person name="Leigh J.A."/>
            <person name="Li W."/>
            <person name="Liu J."/>
            <person name="Mukhopadhyay B."/>
            <person name="Reeve J.N."/>
            <person name="Smith K."/>
            <person name="Springer T.A."/>
            <person name="Umayam L.A."/>
            <person name="White O."/>
            <person name="White R.H."/>
            <person name="de Macario E.C."/>
            <person name="Ferry J.G."/>
            <person name="Jarrell K.F."/>
            <person name="Jing H."/>
            <person name="Macario A.J.L."/>
            <person name="Paulsen I.T."/>
            <person name="Pritchett M."/>
            <person name="Sowers K.R."/>
            <person name="Swanson R.V."/>
            <person name="Zinder S.H."/>
            <person name="Lander E."/>
            <person name="Metcalf W.W."/>
            <person name="Birren B."/>
        </authorList>
    </citation>
    <scope>NUCLEOTIDE SEQUENCE [LARGE SCALE GENOMIC DNA]</scope>
    <source>
        <strain>ATCC 35395 / DSM 2834 / JCM 12185 / C2A</strain>
    </source>
</reference>
<organism>
    <name type="scientific">Methanosarcina acetivorans (strain ATCC 35395 / DSM 2834 / JCM 12185 / C2A)</name>
    <dbReference type="NCBI Taxonomy" id="188937"/>
    <lineage>
        <taxon>Archaea</taxon>
        <taxon>Methanobacteriati</taxon>
        <taxon>Methanobacteriota</taxon>
        <taxon>Stenosarchaea group</taxon>
        <taxon>Methanomicrobia</taxon>
        <taxon>Methanosarcinales</taxon>
        <taxon>Methanosarcinaceae</taxon>
        <taxon>Methanosarcina</taxon>
    </lineage>
</organism>
<dbReference type="EC" id="5.4.99.25" evidence="1"/>
<dbReference type="EMBL" id="AE010299">
    <property type="protein sequence ID" value="AAM04529.1"/>
    <property type="molecule type" value="Genomic_DNA"/>
</dbReference>
<dbReference type="RefSeq" id="WP_011021133.1">
    <property type="nucleotide sequence ID" value="NC_003552.1"/>
</dbReference>
<dbReference type="SMR" id="Q8TRR5"/>
<dbReference type="FunCoup" id="Q8TRR5">
    <property type="interactions" value="207"/>
</dbReference>
<dbReference type="STRING" id="188937.MA_1105"/>
<dbReference type="EnsemblBacteria" id="AAM04529">
    <property type="protein sequence ID" value="AAM04529"/>
    <property type="gene ID" value="MA_1105"/>
</dbReference>
<dbReference type="GeneID" id="1472994"/>
<dbReference type="KEGG" id="mac:MA_1105"/>
<dbReference type="HOGENOM" id="CLU_032087_3_0_2"/>
<dbReference type="InParanoid" id="Q8TRR5"/>
<dbReference type="OrthoDB" id="35866at2157"/>
<dbReference type="PhylomeDB" id="Q8TRR5"/>
<dbReference type="Proteomes" id="UP000002487">
    <property type="component" value="Chromosome"/>
</dbReference>
<dbReference type="GO" id="GO:0009982">
    <property type="term" value="F:pseudouridine synthase activity"/>
    <property type="evidence" value="ECO:0000318"/>
    <property type="project" value="GO_Central"/>
</dbReference>
<dbReference type="GO" id="GO:0003723">
    <property type="term" value="F:RNA binding"/>
    <property type="evidence" value="ECO:0007669"/>
    <property type="project" value="InterPro"/>
</dbReference>
<dbReference type="GO" id="GO:0160148">
    <property type="term" value="F:tRNA pseudouridine(55) synthase activity"/>
    <property type="evidence" value="ECO:0007669"/>
    <property type="project" value="UniProtKB-EC"/>
</dbReference>
<dbReference type="GO" id="GO:0000495">
    <property type="term" value="P:box H/ACA sno(s)RNA 3'-end processing"/>
    <property type="evidence" value="ECO:0000318"/>
    <property type="project" value="GO_Central"/>
</dbReference>
<dbReference type="GO" id="GO:1990481">
    <property type="term" value="P:mRNA pseudouridine synthesis"/>
    <property type="evidence" value="ECO:0000318"/>
    <property type="project" value="GO_Central"/>
</dbReference>
<dbReference type="GO" id="GO:0031118">
    <property type="term" value="P:rRNA pseudouridine synthesis"/>
    <property type="evidence" value="ECO:0000318"/>
    <property type="project" value="GO_Central"/>
</dbReference>
<dbReference type="GO" id="GO:0031120">
    <property type="term" value="P:snRNA pseudouridine synthesis"/>
    <property type="evidence" value="ECO:0000318"/>
    <property type="project" value="GO_Central"/>
</dbReference>
<dbReference type="GO" id="GO:0031119">
    <property type="term" value="P:tRNA pseudouridine synthesis"/>
    <property type="evidence" value="ECO:0007669"/>
    <property type="project" value="UniProtKB-UniRule"/>
</dbReference>
<dbReference type="CDD" id="cd02572">
    <property type="entry name" value="PseudoU_synth_hDyskerin"/>
    <property type="match status" value="1"/>
</dbReference>
<dbReference type="CDD" id="cd21148">
    <property type="entry name" value="PUA_Cbf5"/>
    <property type="match status" value="1"/>
</dbReference>
<dbReference type="FunFam" id="3.30.2350.10:FF:000001">
    <property type="entry name" value="H/ACA ribonucleoprotein complex subunit CBF5"/>
    <property type="match status" value="1"/>
</dbReference>
<dbReference type="Gene3D" id="3.30.2350.10">
    <property type="entry name" value="Pseudouridine synthase"/>
    <property type="match status" value="1"/>
</dbReference>
<dbReference type="Gene3D" id="2.30.130.10">
    <property type="entry name" value="PUA domain"/>
    <property type="match status" value="1"/>
</dbReference>
<dbReference type="HAMAP" id="MF_01081">
    <property type="entry name" value="TruB_arch"/>
    <property type="match status" value="1"/>
</dbReference>
<dbReference type="InterPro" id="IPR012960">
    <property type="entry name" value="Dyskerin-like"/>
</dbReference>
<dbReference type="InterPro" id="IPR020103">
    <property type="entry name" value="PsdUridine_synth_cat_dom_sf"/>
</dbReference>
<dbReference type="InterPro" id="IPR002501">
    <property type="entry name" value="PsdUridine_synth_N"/>
</dbReference>
<dbReference type="InterPro" id="IPR002478">
    <property type="entry name" value="PUA"/>
</dbReference>
<dbReference type="InterPro" id="IPR015947">
    <property type="entry name" value="PUA-like_sf"/>
</dbReference>
<dbReference type="InterPro" id="IPR036974">
    <property type="entry name" value="PUA_sf"/>
</dbReference>
<dbReference type="InterPro" id="IPR004802">
    <property type="entry name" value="tRNA_PsdUridine_synth_B_fam"/>
</dbReference>
<dbReference type="InterPro" id="IPR026326">
    <property type="entry name" value="TruB_arch"/>
</dbReference>
<dbReference type="InterPro" id="IPR032819">
    <property type="entry name" value="TruB_C"/>
</dbReference>
<dbReference type="NCBIfam" id="TIGR00425">
    <property type="entry name" value="CBF5"/>
    <property type="match status" value="1"/>
</dbReference>
<dbReference type="NCBIfam" id="NF003280">
    <property type="entry name" value="PRK04270.1"/>
    <property type="match status" value="1"/>
</dbReference>
<dbReference type="PANTHER" id="PTHR23127">
    <property type="entry name" value="CENTROMERE/MICROTUBULE BINDING PROTEIN CBF5"/>
    <property type="match status" value="1"/>
</dbReference>
<dbReference type="PANTHER" id="PTHR23127:SF0">
    <property type="entry name" value="H_ACA RIBONUCLEOPROTEIN COMPLEX SUBUNIT DKC1"/>
    <property type="match status" value="1"/>
</dbReference>
<dbReference type="Pfam" id="PF08068">
    <property type="entry name" value="DKCLD"/>
    <property type="match status" value="1"/>
</dbReference>
<dbReference type="Pfam" id="PF01472">
    <property type="entry name" value="PUA"/>
    <property type="match status" value="1"/>
</dbReference>
<dbReference type="Pfam" id="PF16198">
    <property type="entry name" value="TruB_C_2"/>
    <property type="match status" value="1"/>
</dbReference>
<dbReference type="Pfam" id="PF01509">
    <property type="entry name" value="TruB_N"/>
    <property type="match status" value="2"/>
</dbReference>
<dbReference type="SMART" id="SM01136">
    <property type="entry name" value="DKCLD"/>
    <property type="match status" value="1"/>
</dbReference>
<dbReference type="SMART" id="SM00359">
    <property type="entry name" value="PUA"/>
    <property type="match status" value="1"/>
</dbReference>
<dbReference type="SUPFAM" id="SSF55120">
    <property type="entry name" value="Pseudouridine synthase"/>
    <property type="match status" value="1"/>
</dbReference>
<dbReference type="SUPFAM" id="SSF88697">
    <property type="entry name" value="PUA domain-like"/>
    <property type="match status" value="1"/>
</dbReference>
<dbReference type="PROSITE" id="PS50890">
    <property type="entry name" value="PUA"/>
    <property type="match status" value="1"/>
</dbReference>
<accession>Q8TRR5</accession>